<evidence type="ECO:0000255" key="1">
    <source>
        <dbReference type="HAMAP-Rule" id="MF_01537"/>
    </source>
</evidence>
<proteinExistence type="inferred from homology"/>
<dbReference type="EC" id="2.4.2.1" evidence="1"/>
<dbReference type="EC" id="2.4.2.2" evidence="1"/>
<dbReference type="EMBL" id="CP001063">
    <property type="protein sequence ID" value="ACD09536.1"/>
    <property type="molecule type" value="Genomic_DNA"/>
</dbReference>
<dbReference type="RefSeq" id="WP_000941942.1">
    <property type="nucleotide sequence ID" value="NC_010658.1"/>
</dbReference>
<dbReference type="SMR" id="B2U3Z3"/>
<dbReference type="STRING" id="344609.SbBS512_E0308"/>
<dbReference type="GeneID" id="93777070"/>
<dbReference type="KEGG" id="sbc:SbBS512_E0308"/>
<dbReference type="HOGENOM" id="CLU_157874_0_0_6"/>
<dbReference type="Proteomes" id="UP000001030">
    <property type="component" value="Chromosome"/>
</dbReference>
<dbReference type="GO" id="GO:0005829">
    <property type="term" value="C:cytosol"/>
    <property type="evidence" value="ECO:0007669"/>
    <property type="project" value="TreeGrafter"/>
</dbReference>
<dbReference type="GO" id="GO:0047975">
    <property type="term" value="F:guanosine phosphorylase activity"/>
    <property type="evidence" value="ECO:0007669"/>
    <property type="project" value="UniProtKB-EC"/>
</dbReference>
<dbReference type="GO" id="GO:0004731">
    <property type="term" value="F:purine-nucleoside phosphorylase activity"/>
    <property type="evidence" value="ECO:0007669"/>
    <property type="project" value="UniProtKB-UniRule"/>
</dbReference>
<dbReference type="GO" id="GO:0009032">
    <property type="term" value="F:thymidine phosphorylase activity"/>
    <property type="evidence" value="ECO:0007669"/>
    <property type="project" value="UniProtKB-EC"/>
</dbReference>
<dbReference type="GO" id="GO:0004850">
    <property type="term" value="F:uridine phosphorylase activity"/>
    <property type="evidence" value="ECO:0007669"/>
    <property type="project" value="UniProtKB-EC"/>
</dbReference>
<dbReference type="CDD" id="cd20296">
    <property type="entry name" value="cupin_PpnP-like"/>
    <property type="match status" value="1"/>
</dbReference>
<dbReference type="FunFam" id="2.60.120.10:FF:000016">
    <property type="entry name" value="Pyrimidine/purine nucleoside phosphorylase"/>
    <property type="match status" value="1"/>
</dbReference>
<dbReference type="Gene3D" id="2.60.120.10">
    <property type="entry name" value="Jelly Rolls"/>
    <property type="match status" value="1"/>
</dbReference>
<dbReference type="HAMAP" id="MF_01537">
    <property type="entry name" value="Nucleos_phosphorylase_PpnP"/>
    <property type="match status" value="1"/>
</dbReference>
<dbReference type="InterPro" id="IPR009664">
    <property type="entry name" value="Ppnp"/>
</dbReference>
<dbReference type="InterPro" id="IPR014710">
    <property type="entry name" value="RmlC-like_jellyroll"/>
</dbReference>
<dbReference type="InterPro" id="IPR011051">
    <property type="entry name" value="RmlC_Cupin_sf"/>
</dbReference>
<dbReference type="NCBIfam" id="NF007875">
    <property type="entry name" value="PRK10579.1"/>
    <property type="match status" value="1"/>
</dbReference>
<dbReference type="PANTHER" id="PTHR36540">
    <property type="entry name" value="PYRIMIDINE/PURINE NUCLEOSIDE PHOSPHORYLASE"/>
    <property type="match status" value="1"/>
</dbReference>
<dbReference type="PANTHER" id="PTHR36540:SF1">
    <property type="entry name" value="PYRIMIDINE_PURINE NUCLEOSIDE PHOSPHORYLASE"/>
    <property type="match status" value="1"/>
</dbReference>
<dbReference type="Pfam" id="PF06865">
    <property type="entry name" value="Ppnp"/>
    <property type="match status" value="1"/>
</dbReference>
<dbReference type="SUPFAM" id="SSF51182">
    <property type="entry name" value="RmlC-like cupins"/>
    <property type="match status" value="1"/>
</dbReference>
<reference key="1">
    <citation type="submission" date="2008-05" db="EMBL/GenBank/DDBJ databases">
        <title>Complete sequence of Shigella boydii serotype 18 strain BS512.</title>
        <authorList>
            <person name="Rasko D.A."/>
            <person name="Rosovitz M."/>
            <person name="Maurelli A.T."/>
            <person name="Myers G."/>
            <person name="Seshadri R."/>
            <person name="Cer R."/>
            <person name="Jiang L."/>
            <person name="Ravel J."/>
            <person name="Sebastian Y."/>
        </authorList>
    </citation>
    <scope>NUCLEOTIDE SEQUENCE [LARGE SCALE GENOMIC DNA]</scope>
    <source>
        <strain>CDC 3083-94 / BS512</strain>
    </source>
</reference>
<organism>
    <name type="scientific">Shigella boydii serotype 18 (strain CDC 3083-94 / BS512)</name>
    <dbReference type="NCBI Taxonomy" id="344609"/>
    <lineage>
        <taxon>Bacteria</taxon>
        <taxon>Pseudomonadati</taxon>
        <taxon>Pseudomonadota</taxon>
        <taxon>Gammaproteobacteria</taxon>
        <taxon>Enterobacterales</taxon>
        <taxon>Enterobacteriaceae</taxon>
        <taxon>Shigella</taxon>
    </lineage>
</organism>
<keyword id="KW-0328">Glycosyltransferase</keyword>
<keyword id="KW-1185">Reference proteome</keyword>
<keyword id="KW-0808">Transferase</keyword>
<name>PPNP_SHIB3</name>
<sequence>MLQSNEYFSGKVKSIGFSSSSTGRASVGVMVEGEYTFSTAEPEEMTVISGALNVLLPDATDWQVYEAGSVFNVPGHSEFHLQVAEPTSYLCRYL</sequence>
<protein>
    <recommendedName>
        <fullName evidence="1">Pyrimidine/purine nucleoside phosphorylase</fullName>
        <ecNumber evidence="1">2.4.2.1</ecNumber>
        <ecNumber evidence="1">2.4.2.2</ecNumber>
    </recommendedName>
    <alternativeName>
        <fullName evidence="1">Adenosine phosphorylase</fullName>
    </alternativeName>
    <alternativeName>
        <fullName evidence="1">Cytidine phosphorylase</fullName>
    </alternativeName>
    <alternativeName>
        <fullName evidence="1">Guanosine phosphorylase</fullName>
    </alternativeName>
    <alternativeName>
        <fullName evidence="1">Inosine phosphorylase</fullName>
    </alternativeName>
    <alternativeName>
        <fullName evidence="1">Thymidine phosphorylase</fullName>
    </alternativeName>
    <alternativeName>
        <fullName evidence="1">Uridine phosphorylase</fullName>
    </alternativeName>
    <alternativeName>
        <fullName evidence="1">Xanthosine phosphorylase</fullName>
    </alternativeName>
</protein>
<feature type="chain" id="PRO_1000198683" description="Pyrimidine/purine nucleoside phosphorylase">
    <location>
        <begin position="1"/>
        <end position="94"/>
    </location>
</feature>
<comment type="function">
    <text evidence="1">Catalyzes the phosphorolysis of diverse nucleosides, yielding D-ribose 1-phosphate and the respective free bases. Can use uridine, adenosine, guanosine, cytidine, thymidine, inosine and xanthosine as substrates. Also catalyzes the reverse reactions.</text>
</comment>
<comment type="catalytic activity">
    <reaction evidence="1">
        <text>a purine D-ribonucleoside + phosphate = a purine nucleobase + alpha-D-ribose 1-phosphate</text>
        <dbReference type="Rhea" id="RHEA:19805"/>
        <dbReference type="ChEBI" id="CHEBI:26386"/>
        <dbReference type="ChEBI" id="CHEBI:43474"/>
        <dbReference type="ChEBI" id="CHEBI:57720"/>
        <dbReference type="ChEBI" id="CHEBI:142355"/>
        <dbReference type="EC" id="2.4.2.1"/>
    </reaction>
</comment>
<comment type="catalytic activity">
    <reaction evidence="1">
        <text>adenosine + phosphate = alpha-D-ribose 1-phosphate + adenine</text>
        <dbReference type="Rhea" id="RHEA:27642"/>
        <dbReference type="ChEBI" id="CHEBI:16335"/>
        <dbReference type="ChEBI" id="CHEBI:16708"/>
        <dbReference type="ChEBI" id="CHEBI:43474"/>
        <dbReference type="ChEBI" id="CHEBI:57720"/>
        <dbReference type="EC" id="2.4.2.1"/>
    </reaction>
</comment>
<comment type="catalytic activity">
    <reaction evidence="1">
        <text>cytidine + phosphate = cytosine + alpha-D-ribose 1-phosphate</text>
        <dbReference type="Rhea" id="RHEA:52540"/>
        <dbReference type="ChEBI" id="CHEBI:16040"/>
        <dbReference type="ChEBI" id="CHEBI:17562"/>
        <dbReference type="ChEBI" id="CHEBI:43474"/>
        <dbReference type="ChEBI" id="CHEBI:57720"/>
        <dbReference type="EC" id="2.4.2.2"/>
    </reaction>
</comment>
<comment type="catalytic activity">
    <reaction evidence="1">
        <text>guanosine + phosphate = alpha-D-ribose 1-phosphate + guanine</text>
        <dbReference type="Rhea" id="RHEA:13233"/>
        <dbReference type="ChEBI" id="CHEBI:16235"/>
        <dbReference type="ChEBI" id="CHEBI:16750"/>
        <dbReference type="ChEBI" id="CHEBI:43474"/>
        <dbReference type="ChEBI" id="CHEBI:57720"/>
        <dbReference type="EC" id="2.4.2.1"/>
    </reaction>
</comment>
<comment type="catalytic activity">
    <reaction evidence="1">
        <text>inosine + phosphate = alpha-D-ribose 1-phosphate + hypoxanthine</text>
        <dbReference type="Rhea" id="RHEA:27646"/>
        <dbReference type="ChEBI" id="CHEBI:17368"/>
        <dbReference type="ChEBI" id="CHEBI:17596"/>
        <dbReference type="ChEBI" id="CHEBI:43474"/>
        <dbReference type="ChEBI" id="CHEBI:57720"/>
        <dbReference type="EC" id="2.4.2.1"/>
    </reaction>
</comment>
<comment type="catalytic activity">
    <reaction evidence="1">
        <text>thymidine + phosphate = 2-deoxy-alpha-D-ribose 1-phosphate + thymine</text>
        <dbReference type="Rhea" id="RHEA:16037"/>
        <dbReference type="ChEBI" id="CHEBI:17748"/>
        <dbReference type="ChEBI" id="CHEBI:17821"/>
        <dbReference type="ChEBI" id="CHEBI:43474"/>
        <dbReference type="ChEBI" id="CHEBI:57259"/>
        <dbReference type="EC" id="2.4.2.2"/>
    </reaction>
</comment>
<comment type="catalytic activity">
    <reaction evidence="1">
        <text>uridine + phosphate = alpha-D-ribose 1-phosphate + uracil</text>
        <dbReference type="Rhea" id="RHEA:24388"/>
        <dbReference type="ChEBI" id="CHEBI:16704"/>
        <dbReference type="ChEBI" id="CHEBI:17568"/>
        <dbReference type="ChEBI" id="CHEBI:43474"/>
        <dbReference type="ChEBI" id="CHEBI:57720"/>
        <dbReference type="EC" id="2.4.2.2"/>
    </reaction>
</comment>
<comment type="catalytic activity">
    <reaction evidence="1">
        <text>xanthosine + phosphate = alpha-D-ribose 1-phosphate + xanthine</text>
        <dbReference type="Rhea" id="RHEA:27638"/>
        <dbReference type="ChEBI" id="CHEBI:17712"/>
        <dbReference type="ChEBI" id="CHEBI:18107"/>
        <dbReference type="ChEBI" id="CHEBI:43474"/>
        <dbReference type="ChEBI" id="CHEBI:57720"/>
        <dbReference type="EC" id="2.4.2.1"/>
    </reaction>
</comment>
<comment type="similarity">
    <text evidence="1">Belongs to the nucleoside phosphorylase PpnP family.</text>
</comment>
<gene>
    <name evidence="1" type="primary">ppnP</name>
    <name type="ordered locus">SbBS512_E0308</name>
</gene>
<accession>B2U3Z3</accession>